<dbReference type="EC" id="2.7.1.33" evidence="1"/>
<dbReference type="EMBL" id="AM233362">
    <property type="protein sequence ID" value="CAJ79110.1"/>
    <property type="molecule type" value="Genomic_DNA"/>
</dbReference>
<dbReference type="RefSeq" id="WP_003015105.1">
    <property type="nucleotide sequence ID" value="NZ_CP009694.1"/>
</dbReference>
<dbReference type="SMR" id="Q2A4C9"/>
<dbReference type="KEGG" id="ftl:FTL_0671"/>
<dbReference type="UniPathway" id="UPA00241">
    <property type="reaction ID" value="UER00352"/>
</dbReference>
<dbReference type="Proteomes" id="UP000001944">
    <property type="component" value="Chromosome"/>
</dbReference>
<dbReference type="GO" id="GO:0005737">
    <property type="term" value="C:cytoplasm"/>
    <property type="evidence" value="ECO:0007669"/>
    <property type="project" value="UniProtKB-SubCell"/>
</dbReference>
<dbReference type="GO" id="GO:0005524">
    <property type="term" value="F:ATP binding"/>
    <property type="evidence" value="ECO:0007669"/>
    <property type="project" value="UniProtKB-UniRule"/>
</dbReference>
<dbReference type="GO" id="GO:0046872">
    <property type="term" value="F:metal ion binding"/>
    <property type="evidence" value="ECO:0007669"/>
    <property type="project" value="UniProtKB-KW"/>
</dbReference>
<dbReference type="GO" id="GO:0004594">
    <property type="term" value="F:pantothenate kinase activity"/>
    <property type="evidence" value="ECO:0007669"/>
    <property type="project" value="UniProtKB-UniRule"/>
</dbReference>
<dbReference type="GO" id="GO:0015937">
    <property type="term" value="P:coenzyme A biosynthetic process"/>
    <property type="evidence" value="ECO:0007669"/>
    <property type="project" value="UniProtKB-UniRule"/>
</dbReference>
<dbReference type="CDD" id="cd24015">
    <property type="entry name" value="ASKHA_NBD_PanK-III"/>
    <property type="match status" value="1"/>
</dbReference>
<dbReference type="Gene3D" id="3.30.420.40">
    <property type="match status" value="2"/>
</dbReference>
<dbReference type="HAMAP" id="MF_01274">
    <property type="entry name" value="Pantothen_kinase_3"/>
    <property type="match status" value="1"/>
</dbReference>
<dbReference type="InterPro" id="IPR043129">
    <property type="entry name" value="ATPase_NBD"/>
</dbReference>
<dbReference type="InterPro" id="IPR004619">
    <property type="entry name" value="Type_III_PanK"/>
</dbReference>
<dbReference type="NCBIfam" id="TIGR00671">
    <property type="entry name" value="baf"/>
    <property type="match status" value="1"/>
</dbReference>
<dbReference type="NCBIfam" id="NF009855">
    <property type="entry name" value="PRK13321.1"/>
    <property type="match status" value="1"/>
</dbReference>
<dbReference type="PANTHER" id="PTHR34265">
    <property type="entry name" value="TYPE III PANTOTHENATE KINASE"/>
    <property type="match status" value="1"/>
</dbReference>
<dbReference type="PANTHER" id="PTHR34265:SF1">
    <property type="entry name" value="TYPE III PANTOTHENATE KINASE"/>
    <property type="match status" value="1"/>
</dbReference>
<dbReference type="Pfam" id="PF03309">
    <property type="entry name" value="Pan_kinase"/>
    <property type="match status" value="1"/>
</dbReference>
<dbReference type="SUPFAM" id="SSF53067">
    <property type="entry name" value="Actin-like ATPase domain"/>
    <property type="match status" value="2"/>
</dbReference>
<feature type="chain" id="PRO_0000267530" description="Type III pantothenate kinase 1">
    <location>
        <begin position="1"/>
        <end position="256"/>
    </location>
</feature>
<feature type="active site" description="Proton acceptor" evidence="1">
    <location>
        <position position="109"/>
    </location>
</feature>
<feature type="binding site" evidence="1">
    <location>
        <begin position="6"/>
        <end position="13"/>
    </location>
    <ligand>
        <name>ATP</name>
        <dbReference type="ChEBI" id="CHEBI:30616"/>
    </ligand>
</feature>
<feature type="binding site" evidence="1">
    <location>
        <begin position="107"/>
        <end position="110"/>
    </location>
    <ligand>
        <name>substrate</name>
    </ligand>
</feature>
<feature type="binding site" evidence="1">
    <location>
        <position position="130"/>
    </location>
    <ligand>
        <name>K(+)</name>
        <dbReference type="ChEBI" id="CHEBI:29103"/>
    </ligand>
</feature>
<feature type="binding site" evidence="1">
    <location>
        <position position="133"/>
    </location>
    <ligand>
        <name>ATP</name>
        <dbReference type="ChEBI" id="CHEBI:30616"/>
    </ligand>
</feature>
<feature type="binding site" evidence="1">
    <location>
        <position position="185"/>
    </location>
    <ligand>
        <name>substrate</name>
    </ligand>
</feature>
<reference key="1">
    <citation type="submission" date="2006-03" db="EMBL/GenBank/DDBJ databases">
        <title>Complete genome sequence of Francisella tularensis LVS (Live Vaccine Strain).</title>
        <authorList>
            <person name="Chain P."/>
            <person name="Larimer F."/>
            <person name="Land M."/>
            <person name="Stilwagen S."/>
            <person name="Larsson P."/>
            <person name="Bearden S."/>
            <person name="Chu M."/>
            <person name="Oyston P."/>
            <person name="Forsman M."/>
            <person name="Andersson S."/>
            <person name="Lindler L."/>
            <person name="Titball R."/>
            <person name="Garcia E."/>
        </authorList>
    </citation>
    <scope>NUCLEOTIDE SEQUENCE [LARGE SCALE GENOMIC DNA]</scope>
    <source>
        <strain>LVS</strain>
    </source>
</reference>
<sequence length="256" mass="27922">MIVCIDIGNSHIFGGVFVGDQIKHNFRYPSTTPCTSDTLGIFLLSFFERKKLDIEDIEAVVLSSVVLHLEYSVNSACKKYLGITPLELKPGVKTGLKLDIKNPLDLGADRVANSVAAISLFPSRNIIVVDFGTATTICAISENKTYIGGAILPGINLSMESLSQKTAKLSNVTISHPSSALGKTTISQIQSGLIYGQLGAIKEIINRISQENFIDKPPILIATGGYAHIFEKEQYFDVIISDLLLHGLRIIWQMNK</sequence>
<protein>
    <recommendedName>
        <fullName evidence="1">Type III pantothenate kinase 1</fullName>
        <ecNumber evidence="1">2.7.1.33</ecNumber>
    </recommendedName>
    <alternativeName>
        <fullName evidence="1">PanK-III 1</fullName>
    </alternativeName>
    <alternativeName>
        <fullName evidence="1">Pantothenic acid kinase 1</fullName>
    </alternativeName>
</protein>
<organism>
    <name type="scientific">Francisella tularensis subsp. holarctica (strain LVS)</name>
    <dbReference type="NCBI Taxonomy" id="376619"/>
    <lineage>
        <taxon>Bacteria</taxon>
        <taxon>Pseudomonadati</taxon>
        <taxon>Pseudomonadota</taxon>
        <taxon>Gammaproteobacteria</taxon>
        <taxon>Thiotrichales</taxon>
        <taxon>Francisellaceae</taxon>
        <taxon>Francisella</taxon>
    </lineage>
</organism>
<name>COAX1_FRATH</name>
<proteinExistence type="inferred from homology"/>
<evidence type="ECO:0000255" key="1">
    <source>
        <dbReference type="HAMAP-Rule" id="MF_01274"/>
    </source>
</evidence>
<accession>Q2A4C9</accession>
<keyword id="KW-0067">ATP-binding</keyword>
<keyword id="KW-0173">Coenzyme A biosynthesis</keyword>
<keyword id="KW-0963">Cytoplasm</keyword>
<keyword id="KW-0418">Kinase</keyword>
<keyword id="KW-0479">Metal-binding</keyword>
<keyword id="KW-0547">Nucleotide-binding</keyword>
<keyword id="KW-0630">Potassium</keyword>
<keyword id="KW-1185">Reference proteome</keyword>
<keyword id="KW-0808">Transferase</keyword>
<gene>
    <name evidence="1" type="primary">coaX1</name>
    <name type="ordered locus">FTL_0671</name>
</gene>
<comment type="function">
    <text evidence="1">Catalyzes the phosphorylation of pantothenate (Pan), the first step in CoA biosynthesis.</text>
</comment>
<comment type="catalytic activity">
    <reaction evidence="1">
        <text>(R)-pantothenate + ATP = (R)-4'-phosphopantothenate + ADP + H(+)</text>
        <dbReference type="Rhea" id="RHEA:16373"/>
        <dbReference type="ChEBI" id="CHEBI:10986"/>
        <dbReference type="ChEBI" id="CHEBI:15378"/>
        <dbReference type="ChEBI" id="CHEBI:29032"/>
        <dbReference type="ChEBI" id="CHEBI:30616"/>
        <dbReference type="ChEBI" id="CHEBI:456216"/>
        <dbReference type="EC" id="2.7.1.33"/>
    </reaction>
</comment>
<comment type="cofactor">
    <cofactor evidence="1">
        <name>NH4(+)</name>
        <dbReference type="ChEBI" id="CHEBI:28938"/>
    </cofactor>
    <cofactor evidence="1">
        <name>K(+)</name>
        <dbReference type="ChEBI" id="CHEBI:29103"/>
    </cofactor>
    <text evidence="1">A monovalent cation. Ammonium or potassium.</text>
</comment>
<comment type="pathway">
    <text evidence="1">Cofactor biosynthesis; coenzyme A biosynthesis; CoA from (R)-pantothenate: step 1/5.</text>
</comment>
<comment type="subunit">
    <text evidence="1">Homodimer.</text>
</comment>
<comment type="subcellular location">
    <subcellularLocation>
        <location evidence="1">Cytoplasm</location>
    </subcellularLocation>
</comment>
<comment type="similarity">
    <text evidence="1">Belongs to the type III pantothenate kinase family.</text>
</comment>